<feature type="chain" id="PRO_1000122331" description="Large ribosomal subunit protein bL20">
    <location>
        <begin position="1"/>
        <end position="117"/>
    </location>
</feature>
<dbReference type="EMBL" id="CP000777">
    <property type="protein sequence ID" value="ABZ94819.1"/>
    <property type="molecule type" value="Genomic_DNA"/>
</dbReference>
<dbReference type="RefSeq" id="WP_002975326.1">
    <property type="nucleotide sequence ID" value="NC_010842.1"/>
</dbReference>
<dbReference type="SMR" id="B0SCH2"/>
<dbReference type="GeneID" id="79828684"/>
<dbReference type="KEGG" id="lbf:LBF_2329"/>
<dbReference type="HOGENOM" id="CLU_123265_0_1_12"/>
<dbReference type="GO" id="GO:1990904">
    <property type="term" value="C:ribonucleoprotein complex"/>
    <property type="evidence" value="ECO:0007669"/>
    <property type="project" value="UniProtKB-KW"/>
</dbReference>
<dbReference type="GO" id="GO:0005840">
    <property type="term" value="C:ribosome"/>
    <property type="evidence" value="ECO:0007669"/>
    <property type="project" value="UniProtKB-KW"/>
</dbReference>
<dbReference type="GO" id="GO:0019843">
    <property type="term" value="F:rRNA binding"/>
    <property type="evidence" value="ECO:0007669"/>
    <property type="project" value="UniProtKB-UniRule"/>
</dbReference>
<dbReference type="GO" id="GO:0003735">
    <property type="term" value="F:structural constituent of ribosome"/>
    <property type="evidence" value="ECO:0007669"/>
    <property type="project" value="InterPro"/>
</dbReference>
<dbReference type="GO" id="GO:0000027">
    <property type="term" value="P:ribosomal large subunit assembly"/>
    <property type="evidence" value="ECO:0007669"/>
    <property type="project" value="UniProtKB-UniRule"/>
</dbReference>
<dbReference type="GO" id="GO:0006412">
    <property type="term" value="P:translation"/>
    <property type="evidence" value="ECO:0007669"/>
    <property type="project" value="InterPro"/>
</dbReference>
<dbReference type="CDD" id="cd07026">
    <property type="entry name" value="Ribosomal_L20"/>
    <property type="match status" value="1"/>
</dbReference>
<dbReference type="FunFam" id="1.10.1900.20:FF:000001">
    <property type="entry name" value="50S ribosomal protein L20"/>
    <property type="match status" value="1"/>
</dbReference>
<dbReference type="Gene3D" id="6.10.160.10">
    <property type="match status" value="1"/>
</dbReference>
<dbReference type="Gene3D" id="1.10.1900.20">
    <property type="entry name" value="Ribosomal protein L20"/>
    <property type="match status" value="1"/>
</dbReference>
<dbReference type="HAMAP" id="MF_00382">
    <property type="entry name" value="Ribosomal_bL20"/>
    <property type="match status" value="1"/>
</dbReference>
<dbReference type="InterPro" id="IPR005813">
    <property type="entry name" value="Ribosomal_bL20"/>
</dbReference>
<dbReference type="InterPro" id="IPR049946">
    <property type="entry name" value="RIBOSOMAL_L20_CS"/>
</dbReference>
<dbReference type="InterPro" id="IPR035566">
    <property type="entry name" value="Ribosomal_protein_bL20_C"/>
</dbReference>
<dbReference type="NCBIfam" id="TIGR01032">
    <property type="entry name" value="rplT_bact"/>
    <property type="match status" value="1"/>
</dbReference>
<dbReference type="PANTHER" id="PTHR10986">
    <property type="entry name" value="39S RIBOSOMAL PROTEIN L20"/>
    <property type="match status" value="1"/>
</dbReference>
<dbReference type="Pfam" id="PF00453">
    <property type="entry name" value="Ribosomal_L20"/>
    <property type="match status" value="1"/>
</dbReference>
<dbReference type="PRINTS" id="PR00062">
    <property type="entry name" value="RIBOSOMALL20"/>
</dbReference>
<dbReference type="SUPFAM" id="SSF74731">
    <property type="entry name" value="Ribosomal protein L20"/>
    <property type="match status" value="1"/>
</dbReference>
<dbReference type="PROSITE" id="PS00937">
    <property type="entry name" value="RIBOSOMAL_L20"/>
    <property type="match status" value="1"/>
</dbReference>
<proteinExistence type="inferred from homology"/>
<name>RL20_LEPBA</name>
<keyword id="KW-0687">Ribonucleoprotein</keyword>
<keyword id="KW-0689">Ribosomal protein</keyword>
<keyword id="KW-0694">RNA-binding</keyword>
<keyword id="KW-0699">rRNA-binding</keyword>
<protein>
    <recommendedName>
        <fullName evidence="1">Large ribosomal subunit protein bL20</fullName>
    </recommendedName>
    <alternativeName>
        <fullName evidence="2">50S ribosomal protein L20</fullName>
    </alternativeName>
</protein>
<comment type="function">
    <text evidence="1">Binds directly to 23S ribosomal RNA and is necessary for the in vitro assembly process of the 50S ribosomal subunit. It is not involved in the protein synthesizing functions of that subunit.</text>
</comment>
<comment type="similarity">
    <text evidence="1">Belongs to the bacterial ribosomal protein bL20 family.</text>
</comment>
<gene>
    <name evidence="1" type="primary">rplT</name>
    <name type="ordered locus">LBF_2329</name>
</gene>
<sequence length="117" mass="13511">MPRAVNGTIHKNRRKKVLAKAKGFRGGRSKLFRTAKSAVMKAGQWAYRDRRKKKSEFRKLWITRINAAVRENGMSYSKFIHALKTHGINLDRKTLADLAYNHKEVFNAIVEKTKVAK</sequence>
<reference key="1">
    <citation type="journal article" date="2008" name="PLoS ONE">
        <title>Genome sequence of the saprophyte Leptospira biflexa provides insights into the evolution of Leptospira and the pathogenesis of leptospirosis.</title>
        <authorList>
            <person name="Picardeau M."/>
            <person name="Bulach D.M."/>
            <person name="Bouchier C."/>
            <person name="Zuerner R.L."/>
            <person name="Zidane N."/>
            <person name="Wilson P.J."/>
            <person name="Creno S."/>
            <person name="Kuczek E.S."/>
            <person name="Bommezzadri S."/>
            <person name="Davis J.C."/>
            <person name="McGrath A."/>
            <person name="Johnson M.J."/>
            <person name="Boursaux-Eude C."/>
            <person name="Seemann T."/>
            <person name="Rouy Z."/>
            <person name="Coppel R.L."/>
            <person name="Rood J.I."/>
            <person name="Lajus A."/>
            <person name="Davies J.K."/>
            <person name="Medigue C."/>
            <person name="Adler B."/>
        </authorList>
    </citation>
    <scope>NUCLEOTIDE SEQUENCE [LARGE SCALE GENOMIC DNA]</scope>
    <source>
        <strain>Patoc 1 / Ames</strain>
    </source>
</reference>
<accession>B0SCH2</accession>
<evidence type="ECO:0000255" key="1">
    <source>
        <dbReference type="HAMAP-Rule" id="MF_00382"/>
    </source>
</evidence>
<evidence type="ECO:0000305" key="2"/>
<organism>
    <name type="scientific">Leptospira biflexa serovar Patoc (strain Patoc 1 / Ames)</name>
    <dbReference type="NCBI Taxonomy" id="355278"/>
    <lineage>
        <taxon>Bacteria</taxon>
        <taxon>Pseudomonadati</taxon>
        <taxon>Spirochaetota</taxon>
        <taxon>Spirochaetia</taxon>
        <taxon>Leptospirales</taxon>
        <taxon>Leptospiraceae</taxon>
        <taxon>Leptospira</taxon>
    </lineage>
</organism>